<keyword id="KW-0067">ATP-binding</keyword>
<keyword id="KW-0963">Cytoplasm</keyword>
<keyword id="KW-0418">Kinase</keyword>
<keyword id="KW-0520">NAD</keyword>
<keyword id="KW-0521">NADP</keyword>
<keyword id="KW-0547">Nucleotide-binding</keyword>
<keyword id="KW-0808">Transferase</keyword>
<protein>
    <recommendedName>
        <fullName evidence="1">NAD kinase 2</fullName>
        <ecNumber evidence="1">2.7.1.23</ecNumber>
    </recommendedName>
    <alternativeName>
        <fullName evidence="1">ATP-dependent NAD kinase 2</fullName>
    </alternativeName>
</protein>
<accession>Q5N133</accession>
<feature type="chain" id="PRO_0000229701" description="NAD kinase 2">
    <location>
        <begin position="1"/>
        <end position="305"/>
    </location>
</feature>
<feature type="active site" description="Proton acceptor" evidence="1">
    <location>
        <position position="78"/>
    </location>
</feature>
<feature type="binding site" evidence="1">
    <location>
        <begin position="78"/>
        <end position="79"/>
    </location>
    <ligand>
        <name>NAD(+)</name>
        <dbReference type="ChEBI" id="CHEBI:57540"/>
    </ligand>
</feature>
<feature type="binding site" evidence="1">
    <location>
        <begin position="152"/>
        <end position="153"/>
    </location>
    <ligand>
        <name>NAD(+)</name>
        <dbReference type="ChEBI" id="CHEBI:57540"/>
    </ligand>
</feature>
<feature type="binding site" evidence="1">
    <location>
        <position position="182"/>
    </location>
    <ligand>
        <name>NAD(+)</name>
        <dbReference type="ChEBI" id="CHEBI:57540"/>
    </ligand>
</feature>
<feature type="binding site" evidence="1">
    <location>
        <begin position="193"/>
        <end position="198"/>
    </location>
    <ligand>
        <name>NAD(+)</name>
        <dbReference type="ChEBI" id="CHEBI:57540"/>
    </ligand>
</feature>
<feature type="binding site" evidence="1">
    <location>
        <position position="251"/>
    </location>
    <ligand>
        <name>NAD(+)</name>
        <dbReference type="ChEBI" id="CHEBI:57540"/>
    </ligand>
</feature>
<sequence>MPDVGIIYNDSKPRACTIAEELQQQLQDRGWGVRLATSQSGLLGYSNPDTVICHTPVESLVPRGFDASLRWAIVLGGDGTVLAAARQLAPIGVPMLTVNTGHLGFLAEAYLDSLPAAIEQLCKGEYSIEERTMMEVKVLRRELIRWEALSLNEMALHREPLTSMCHFEVAIGKHVPVDIAADGVIVSTPTGSTAYSLSSGGPVVTPDVPVFQLVPICPHSLASRALVFANREPMTIFPATPERLMMVVDGNAGCYVWPEDRVLIQRSRYPAQFIRLQPNEFFRVLREKLGWGLPHVAKPSAPDQS</sequence>
<dbReference type="EC" id="2.7.1.23" evidence="1"/>
<dbReference type="EMBL" id="AP008231">
    <property type="protein sequence ID" value="BAD79987.1"/>
    <property type="molecule type" value="Genomic_DNA"/>
</dbReference>
<dbReference type="RefSeq" id="WP_011244107.1">
    <property type="nucleotide sequence ID" value="NZ_CP085785.1"/>
</dbReference>
<dbReference type="SMR" id="Q5N133"/>
<dbReference type="KEGG" id="syc:syc1797_c"/>
<dbReference type="eggNOG" id="COG0061">
    <property type="taxonomic scope" value="Bacteria"/>
</dbReference>
<dbReference type="Proteomes" id="UP000001175">
    <property type="component" value="Chromosome"/>
</dbReference>
<dbReference type="GO" id="GO:0005737">
    <property type="term" value="C:cytoplasm"/>
    <property type="evidence" value="ECO:0007669"/>
    <property type="project" value="UniProtKB-SubCell"/>
</dbReference>
<dbReference type="GO" id="GO:0005524">
    <property type="term" value="F:ATP binding"/>
    <property type="evidence" value="ECO:0007669"/>
    <property type="project" value="UniProtKB-KW"/>
</dbReference>
<dbReference type="GO" id="GO:0046872">
    <property type="term" value="F:metal ion binding"/>
    <property type="evidence" value="ECO:0007669"/>
    <property type="project" value="UniProtKB-UniRule"/>
</dbReference>
<dbReference type="GO" id="GO:0051287">
    <property type="term" value="F:NAD binding"/>
    <property type="evidence" value="ECO:0007669"/>
    <property type="project" value="UniProtKB-ARBA"/>
</dbReference>
<dbReference type="GO" id="GO:0003951">
    <property type="term" value="F:NAD+ kinase activity"/>
    <property type="evidence" value="ECO:0007669"/>
    <property type="project" value="UniProtKB-UniRule"/>
</dbReference>
<dbReference type="GO" id="GO:0019674">
    <property type="term" value="P:NAD metabolic process"/>
    <property type="evidence" value="ECO:0007669"/>
    <property type="project" value="InterPro"/>
</dbReference>
<dbReference type="GO" id="GO:0006741">
    <property type="term" value="P:NADP biosynthetic process"/>
    <property type="evidence" value="ECO:0007669"/>
    <property type="project" value="UniProtKB-UniRule"/>
</dbReference>
<dbReference type="Gene3D" id="3.40.50.10330">
    <property type="entry name" value="Probable inorganic polyphosphate/atp-NAD kinase, domain 1"/>
    <property type="match status" value="1"/>
</dbReference>
<dbReference type="Gene3D" id="2.60.200.30">
    <property type="entry name" value="Probable inorganic polyphosphate/atp-NAD kinase, domain 2"/>
    <property type="match status" value="1"/>
</dbReference>
<dbReference type="HAMAP" id="MF_00361">
    <property type="entry name" value="NAD_kinase"/>
    <property type="match status" value="1"/>
</dbReference>
<dbReference type="InterPro" id="IPR017438">
    <property type="entry name" value="ATP-NAD_kinase_N"/>
</dbReference>
<dbReference type="InterPro" id="IPR017437">
    <property type="entry name" value="ATP-NAD_kinase_PpnK-typ_C"/>
</dbReference>
<dbReference type="InterPro" id="IPR016064">
    <property type="entry name" value="NAD/diacylglycerol_kinase_sf"/>
</dbReference>
<dbReference type="InterPro" id="IPR002504">
    <property type="entry name" value="NADK"/>
</dbReference>
<dbReference type="NCBIfam" id="NF002732">
    <property type="entry name" value="PRK02649.1"/>
    <property type="match status" value="1"/>
</dbReference>
<dbReference type="PANTHER" id="PTHR20275">
    <property type="entry name" value="NAD KINASE"/>
    <property type="match status" value="1"/>
</dbReference>
<dbReference type="PANTHER" id="PTHR20275:SF13">
    <property type="entry name" value="NAD KINASE 2"/>
    <property type="match status" value="1"/>
</dbReference>
<dbReference type="Pfam" id="PF01513">
    <property type="entry name" value="NAD_kinase"/>
    <property type="match status" value="1"/>
</dbReference>
<dbReference type="Pfam" id="PF20143">
    <property type="entry name" value="NAD_kinase_C"/>
    <property type="match status" value="1"/>
</dbReference>
<dbReference type="SUPFAM" id="SSF111331">
    <property type="entry name" value="NAD kinase/diacylglycerol kinase-like"/>
    <property type="match status" value="1"/>
</dbReference>
<organism>
    <name type="scientific">Synechococcus sp. (strain ATCC 27144 / PCC 6301 / SAUG 1402/1)</name>
    <name type="common">Anacystis nidulans</name>
    <dbReference type="NCBI Taxonomy" id="269084"/>
    <lineage>
        <taxon>Bacteria</taxon>
        <taxon>Bacillati</taxon>
        <taxon>Cyanobacteriota</taxon>
        <taxon>Cyanophyceae</taxon>
        <taxon>Synechococcales</taxon>
        <taxon>Synechococcaceae</taxon>
        <taxon>Synechococcus</taxon>
    </lineage>
</organism>
<evidence type="ECO:0000255" key="1">
    <source>
        <dbReference type="HAMAP-Rule" id="MF_00361"/>
    </source>
</evidence>
<reference key="1">
    <citation type="journal article" date="2007" name="Photosyn. Res.">
        <title>Complete nucleotide sequence of the freshwater unicellular cyanobacterium Synechococcus elongatus PCC 6301 chromosome: gene content and organization.</title>
        <authorList>
            <person name="Sugita C."/>
            <person name="Ogata K."/>
            <person name="Shikata M."/>
            <person name="Jikuya H."/>
            <person name="Takano J."/>
            <person name="Furumichi M."/>
            <person name="Kanehisa M."/>
            <person name="Omata T."/>
            <person name="Sugiura M."/>
            <person name="Sugita M."/>
        </authorList>
    </citation>
    <scope>NUCLEOTIDE SEQUENCE [LARGE SCALE GENOMIC DNA]</scope>
    <source>
        <strain>ATCC 27144 / PCC 6301 / SAUG 1402/1</strain>
    </source>
</reference>
<comment type="function">
    <text evidence="1">Involved in the regulation of the intracellular balance of NAD and NADP, and is a key enzyme in the biosynthesis of NADP. Catalyzes specifically the phosphorylation on 2'-hydroxyl of the adenosine moiety of NAD to yield NADP.</text>
</comment>
<comment type="catalytic activity">
    <reaction evidence="1">
        <text>NAD(+) + ATP = ADP + NADP(+) + H(+)</text>
        <dbReference type="Rhea" id="RHEA:18629"/>
        <dbReference type="ChEBI" id="CHEBI:15378"/>
        <dbReference type="ChEBI" id="CHEBI:30616"/>
        <dbReference type="ChEBI" id="CHEBI:57540"/>
        <dbReference type="ChEBI" id="CHEBI:58349"/>
        <dbReference type="ChEBI" id="CHEBI:456216"/>
        <dbReference type="EC" id="2.7.1.23"/>
    </reaction>
</comment>
<comment type="cofactor">
    <cofactor evidence="1">
        <name>a divalent metal cation</name>
        <dbReference type="ChEBI" id="CHEBI:60240"/>
    </cofactor>
</comment>
<comment type="subcellular location">
    <subcellularLocation>
        <location evidence="1">Cytoplasm</location>
    </subcellularLocation>
</comment>
<comment type="similarity">
    <text evidence="1">Belongs to the NAD kinase family.</text>
</comment>
<proteinExistence type="inferred from homology"/>
<gene>
    <name evidence="1" type="primary">nadK2</name>
    <name type="ordered locus">syc1797_c</name>
</gene>
<name>NADK2_SYNP6</name>